<proteinExistence type="inferred from homology"/>
<name>DADA_YERPG</name>
<feature type="chain" id="PRO_1000138678" description="D-amino acid dehydrogenase">
    <location>
        <begin position="1"/>
        <end position="434"/>
    </location>
</feature>
<feature type="binding site" evidence="1">
    <location>
        <begin position="3"/>
        <end position="17"/>
    </location>
    <ligand>
        <name>FAD</name>
        <dbReference type="ChEBI" id="CHEBI:57692"/>
    </ligand>
</feature>
<reference key="1">
    <citation type="journal article" date="2010" name="J. Bacteriol.">
        <title>Genome sequence of the deep-rooted Yersinia pestis strain Angola reveals new insights into the evolution and pangenome of the plague bacterium.</title>
        <authorList>
            <person name="Eppinger M."/>
            <person name="Worsham P.L."/>
            <person name="Nikolich M.P."/>
            <person name="Riley D.R."/>
            <person name="Sebastian Y."/>
            <person name="Mou S."/>
            <person name="Achtman M."/>
            <person name="Lindler L.E."/>
            <person name="Ravel J."/>
        </authorList>
    </citation>
    <scope>NUCLEOTIDE SEQUENCE [LARGE SCALE GENOMIC DNA]</scope>
    <source>
        <strain>Angola</strain>
    </source>
</reference>
<evidence type="ECO:0000255" key="1">
    <source>
        <dbReference type="HAMAP-Rule" id="MF_01202"/>
    </source>
</evidence>
<comment type="function">
    <text evidence="1">Oxidative deamination of D-amino acids.</text>
</comment>
<comment type="catalytic activity">
    <reaction evidence="1">
        <text>a D-alpha-amino acid + A + H2O = a 2-oxocarboxylate + AH2 + NH4(+)</text>
        <dbReference type="Rhea" id="RHEA:18125"/>
        <dbReference type="ChEBI" id="CHEBI:13193"/>
        <dbReference type="ChEBI" id="CHEBI:15377"/>
        <dbReference type="ChEBI" id="CHEBI:17499"/>
        <dbReference type="ChEBI" id="CHEBI:28938"/>
        <dbReference type="ChEBI" id="CHEBI:35179"/>
        <dbReference type="ChEBI" id="CHEBI:59871"/>
    </reaction>
</comment>
<comment type="cofactor">
    <cofactor evidence="1">
        <name>FAD</name>
        <dbReference type="ChEBI" id="CHEBI:57692"/>
    </cofactor>
</comment>
<comment type="pathway">
    <text>Amino-acid degradation; D-alanine degradation; NH(3) and pyruvate from D-alanine: step 1/1.</text>
</comment>
<comment type="similarity">
    <text evidence="1">Belongs to the DadA oxidoreductase family.</text>
</comment>
<accession>A9R9D3</accession>
<sequence length="434" mass="47204">MRVVILGSGVVGVTSAWYLAKEGHDVTVIDRQDGPAQETSAGNAGQISPGYAAPWAAPGVPLKAIKWMFQRHAPLAIRLDGSSLQLRWMWQMLRNCDTSHYMVNKSRMVRLAEYSRDCLKDLRAATGIQYEGRQGGTLQLFRTEQQFDNAAKDIAVLDDAGVPYSLLTAEQLATVEPALAKVAHKLTGGLRLPNDETGDCKLFTERLAKMAEQAGVKFIFNRSVDKLLVEGDQIAGVLCGDDIIKADAYVVAFGAYSTALLAGLVSIPVYPLKGYSLTIPITDPASAPFSTVLDETYKIAITRFDDRIRVGGMAEIVGFNTQLAPARRETLEMVVRDLYPHGGDISQAVFWSGLRPMTPDGTPIVGRTPLKNLYLNTGHGTLGWTMACGSGQLLADIIQGRRPAIVADDLSVARYRAGFQPLNIAPLHDIHPIR</sequence>
<protein>
    <recommendedName>
        <fullName evidence="1">D-amino acid dehydrogenase</fullName>
        <ecNumber evidence="1">1.4.99.-</ecNumber>
    </recommendedName>
</protein>
<keyword id="KW-0274">FAD</keyword>
<keyword id="KW-0285">Flavoprotein</keyword>
<keyword id="KW-0560">Oxidoreductase</keyword>
<gene>
    <name evidence="1" type="primary">dadA</name>
    <name type="ordered locus">YpAngola_A2361</name>
</gene>
<dbReference type="EC" id="1.4.99.-" evidence="1"/>
<dbReference type="EMBL" id="CP000901">
    <property type="protein sequence ID" value="ABX85105.1"/>
    <property type="molecule type" value="Genomic_DNA"/>
</dbReference>
<dbReference type="RefSeq" id="WP_002211686.1">
    <property type="nucleotide sequence ID" value="NZ_CP009935.1"/>
</dbReference>
<dbReference type="SMR" id="A9R9D3"/>
<dbReference type="KEGG" id="ypg:YpAngola_A2361"/>
<dbReference type="PATRIC" id="fig|349746.12.peg.3374"/>
<dbReference type="UniPathway" id="UPA00043">
    <property type="reaction ID" value="UER00498"/>
</dbReference>
<dbReference type="GO" id="GO:0005737">
    <property type="term" value="C:cytoplasm"/>
    <property type="evidence" value="ECO:0007669"/>
    <property type="project" value="TreeGrafter"/>
</dbReference>
<dbReference type="GO" id="GO:0005886">
    <property type="term" value="C:plasma membrane"/>
    <property type="evidence" value="ECO:0007669"/>
    <property type="project" value="TreeGrafter"/>
</dbReference>
<dbReference type="GO" id="GO:0008718">
    <property type="term" value="F:D-amino-acid dehydrogenase activity"/>
    <property type="evidence" value="ECO:0007669"/>
    <property type="project" value="UniProtKB-UniRule"/>
</dbReference>
<dbReference type="GO" id="GO:0055130">
    <property type="term" value="P:D-alanine catabolic process"/>
    <property type="evidence" value="ECO:0007669"/>
    <property type="project" value="UniProtKB-UniPathway"/>
</dbReference>
<dbReference type="FunFam" id="3.50.50.60:FF:000020">
    <property type="entry name" value="D-amino acid dehydrogenase"/>
    <property type="match status" value="1"/>
</dbReference>
<dbReference type="Gene3D" id="3.30.9.10">
    <property type="entry name" value="D-Amino Acid Oxidase, subunit A, domain 2"/>
    <property type="match status" value="1"/>
</dbReference>
<dbReference type="Gene3D" id="3.50.50.60">
    <property type="entry name" value="FAD/NAD(P)-binding domain"/>
    <property type="match status" value="2"/>
</dbReference>
<dbReference type="HAMAP" id="MF_01202">
    <property type="entry name" value="DadA"/>
    <property type="match status" value="1"/>
</dbReference>
<dbReference type="InterPro" id="IPR023080">
    <property type="entry name" value="DadA"/>
</dbReference>
<dbReference type="InterPro" id="IPR006076">
    <property type="entry name" value="FAD-dep_OxRdtase"/>
</dbReference>
<dbReference type="InterPro" id="IPR036188">
    <property type="entry name" value="FAD/NAD-bd_sf"/>
</dbReference>
<dbReference type="NCBIfam" id="NF001933">
    <property type="entry name" value="PRK00711.1"/>
    <property type="match status" value="1"/>
</dbReference>
<dbReference type="PANTHER" id="PTHR13847:SF280">
    <property type="entry name" value="D-AMINO ACID DEHYDROGENASE"/>
    <property type="match status" value="1"/>
</dbReference>
<dbReference type="PANTHER" id="PTHR13847">
    <property type="entry name" value="SARCOSINE DEHYDROGENASE-RELATED"/>
    <property type="match status" value="1"/>
</dbReference>
<dbReference type="Pfam" id="PF01266">
    <property type="entry name" value="DAO"/>
    <property type="match status" value="1"/>
</dbReference>
<dbReference type="SUPFAM" id="SSF54373">
    <property type="entry name" value="FAD-linked reductases, C-terminal domain"/>
    <property type="match status" value="1"/>
</dbReference>
<dbReference type="SUPFAM" id="SSF51905">
    <property type="entry name" value="FAD/NAD(P)-binding domain"/>
    <property type="match status" value="1"/>
</dbReference>
<organism>
    <name type="scientific">Yersinia pestis bv. Antiqua (strain Angola)</name>
    <dbReference type="NCBI Taxonomy" id="349746"/>
    <lineage>
        <taxon>Bacteria</taxon>
        <taxon>Pseudomonadati</taxon>
        <taxon>Pseudomonadota</taxon>
        <taxon>Gammaproteobacteria</taxon>
        <taxon>Enterobacterales</taxon>
        <taxon>Yersiniaceae</taxon>
        <taxon>Yersinia</taxon>
    </lineage>
</organism>